<name>MERB1_RAT</name>
<evidence type="ECO:0000255" key="1">
    <source>
        <dbReference type="PROSITE-ProRule" id="PRU01195"/>
    </source>
</evidence>
<evidence type="ECO:0000256" key="2">
    <source>
        <dbReference type="SAM" id="MobiDB-lite"/>
    </source>
</evidence>
<evidence type="ECO:0000305" key="3"/>
<proteinExistence type="evidence at transcript level"/>
<gene>
    <name type="primary">Bmerb1</name>
</gene>
<keyword id="KW-1185">Reference proteome</keyword>
<feature type="chain" id="PRO_0000079284" description="bMERB domain-containing protein 1">
    <location>
        <begin position="1"/>
        <end position="203"/>
    </location>
</feature>
<feature type="domain" description="bMERB" evidence="1">
    <location>
        <begin position="3"/>
        <end position="149"/>
    </location>
</feature>
<feature type="region of interest" description="Disordered" evidence="2">
    <location>
        <begin position="160"/>
        <end position="186"/>
    </location>
</feature>
<sequence>MELKQSLSVHLEAEKPLRRYGAVEETAWKAEGLGSQLDIISMAETSMMPEEIELEMAKIQRLREVLVRRESELRFMMDDIQLCKDIMNLKQELQNLVAIPEKEKTKLQKQREDELIQKIHRLVQKRDFLVDDAEVERLREQEEDKEMADFLRIKLKPLDKVTKSSASSRAEKKAEPPPSKPTVAKTGLALIKDCCGATQCNIM</sequence>
<protein>
    <recommendedName>
        <fullName evidence="3">bMERB domain-containing protein 1</fullName>
    </recommendedName>
    <alternativeName>
        <fullName>Uncharacterized protein C16orf45 homolog</fullName>
    </alternativeName>
</protein>
<reference key="1">
    <citation type="journal article" date="2004" name="Genome Res.">
        <title>The status, quality, and expansion of the NIH full-length cDNA project: the Mammalian Gene Collection (MGC).</title>
        <authorList>
            <consortium name="The MGC Project Team"/>
        </authorList>
    </citation>
    <scope>NUCLEOTIDE SEQUENCE [LARGE SCALE MRNA]</scope>
    <source>
        <tissue>Brain</tissue>
    </source>
</reference>
<accession>Q5FVJ5</accession>
<organism>
    <name type="scientific">Rattus norvegicus</name>
    <name type="common">Rat</name>
    <dbReference type="NCBI Taxonomy" id="10116"/>
    <lineage>
        <taxon>Eukaryota</taxon>
        <taxon>Metazoa</taxon>
        <taxon>Chordata</taxon>
        <taxon>Craniata</taxon>
        <taxon>Vertebrata</taxon>
        <taxon>Euteleostomi</taxon>
        <taxon>Mammalia</taxon>
        <taxon>Eutheria</taxon>
        <taxon>Euarchontoglires</taxon>
        <taxon>Glires</taxon>
        <taxon>Rodentia</taxon>
        <taxon>Myomorpha</taxon>
        <taxon>Muroidea</taxon>
        <taxon>Muridae</taxon>
        <taxon>Murinae</taxon>
        <taxon>Rattus</taxon>
    </lineage>
</organism>
<dbReference type="EMBL" id="BC089943">
    <property type="protein sequence ID" value="AAH89943.1"/>
    <property type="molecule type" value="mRNA"/>
</dbReference>
<dbReference type="RefSeq" id="NP_001014136.1">
    <property type="nucleotide sequence ID" value="NM_001014114.1"/>
</dbReference>
<dbReference type="SMR" id="Q5FVJ5"/>
<dbReference type="FunCoup" id="Q5FVJ5">
    <property type="interactions" value="507"/>
</dbReference>
<dbReference type="iPTMnet" id="Q5FVJ5"/>
<dbReference type="PhosphoSitePlus" id="Q5FVJ5"/>
<dbReference type="SwissPalm" id="Q5FVJ5"/>
<dbReference type="PaxDb" id="10116-ENSRNOP00000004346"/>
<dbReference type="Ensembl" id="ENSRNOT00000004346.7">
    <property type="protein sequence ID" value="ENSRNOP00000004346.6"/>
    <property type="gene ID" value="ENSRNOG00000003198.7"/>
</dbReference>
<dbReference type="GeneID" id="360459"/>
<dbReference type="KEGG" id="rno:360459"/>
<dbReference type="UCSC" id="RGD:1305733">
    <property type="organism name" value="rat"/>
</dbReference>
<dbReference type="AGR" id="RGD:1305733"/>
<dbReference type="CTD" id="89927"/>
<dbReference type="RGD" id="1305733">
    <property type="gene designation" value="Bmerb1"/>
</dbReference>
<dbReference type="eggNOG" id="ENOG502RC9C">
    <property type="taxonomic scope" value="Eukaryota"/>
</dbReference>
<dbReference type="GeneTree" id="ENSGT00440000038745"/>
<dbReference type="HOGENOM" id="CLU_123952_0_0_1"/>
<dbReference type="InParanoid" id="Q5FVJ5"/>
<dbReference type="OMA" id="ATQCSIM"/>
<dbReference type="PhylomeDB" id="Q5FVJ5"/>
<dbReference type="PRO" id="PR:Q5FVJ5"/>
<dbReference type="Proteomes" id="UP000002494">
    <property type="component" value="Chromosome 10"/>
</dbReference>
<dbReference type="Bgee" id="ENSRNOG00000003198">
    <property type="expression patterns" value="Expressed in frontal cortex and 9 other cell types or tissues"/>
</dbReference>
<dbReference type="GO" id="GO:0015630">
    <property type="term" value="C:microtubule cytoskeleton"/>
    <property type="evidence" value="ECO:0000266"/>
    <property type="project" value="RGD"/>
</dbReference>
<dbReference type="GO" id="GO:0021814">
    <property type="term" value="P:cell motility involved in cerebral cortex radial glia guided migration"/>
    <property type="evidence" value="ECO:0000266"/>
    <property type="project" value="RGD"/>
</dbReference>
<dbReference type="GO" id="GO:0007019">
    <property type="term" value="P:microtubule depolymerization"/>
    <property type="evidence" value="ECO:0000266"/>
    <property type="project" value="RGD"/>
</dbReference>
<dbReference type="GO" id="GO:0021822">
    <property type="term" value="P:negative regulation of cell motility involved in cerebral cortex radial glia guided migration"/>
    <property type="evidence" value="ECO:0000266"/>
    <property type="project" value="RGD"/>
</dbReference>
<dbReference type="GO" id="GO:0007026">
    <property type="term" value="P:negative regulation of microtubule depolymerization"/>
    <property type="evidence" value="ECO:0000266"/>
    <property type="project" value="RGD"/>
</dbReference>
<dbReference type="InterPro" id="IPR022735">
    <property type="entry name" value="bMERB_dom"/>
</dbReference>
<dbReference type="InterPro" id="IPR040127">
    <property type="entry name" value="C16orf45-like"/>
</dbReference>
<dbReference type="PANTHER" id="PTHR22704:SF1">
    <property type="entry name" value="BMERB DOMAIN-CONTAINING PROTEIN 1"/>
    <property type="match status" value="1"/>
</dbReference>
<dbReference type="PANTHER" id="PTHR22704">
    <property type="entry name" value="BMERB DOMAIN-CONTAINING PROTEIN 1-RELATED"/>
    <property type="match status" value="1"/>
</dbReference>
<dbReference type="Pfam" id="PF12130">
    <property type="entry name" value="bMERB_dom"/>
    <property type="match status" value="1"/>
</dbReference>
<dbReference type="SMART" id="SM01203">
    <property type="entry name" value="DUF3585"/>
    <property type="match status" value="1"/>
</dbReference>
<dbReference type="PROSITE" id="PS51848">
    <property type="entry name" value="BMERB"/>
    <property type="match status" value="1"/>
</dbReference>